<reference key="1">
    <citation type="journal article" date="2003" name="Nat. Genet.">
        <title>Comparative analysis of the genome sequences of Bordetella pertussis, Bordetella parapertussis and Bordetella bronchiseptica.</title>
        <authorList>
            <person name="Parkhill J."/>
            <person name="Sebaihia M."/>
            <person name="Preston A."/>
            <person name="Murphy L.D."/>
            <person name="Thomson N.R."/>
            <person name="Harris D.E."/>
            <person name="Holden M.T.G."/>
            <person name="Churcher C.M."/>
            <person name="Bentley S.D."/>
            <person name="Mungall K.L."/>
            <person name="Cerdeno-Tarraga A.-M."/>
            <person name="Temple L."/>
            <person name="James K.D."/>
            <person name="Harris B."/>
            <person name="Quail M.A."/>
            <person name="Achtman M."/>
            <person name="Atkin R."/>
            <person name="Baker S."/>
            <person name="Basham D."/>
            <person name="Bason N."/>
            <person name="Cherevach I."/>
            <person name="Chillingworth T."/>
            <person name="Collins M."/>
            <person name="Cronin A."/>
            <person name="Davis P."/>
            <person name="Doggett J."/>
            <person name="Feltwell T."/>
            <person name="Goble A."/>
            <person name="Hamlin N."/>
            <person name="Hauser H."/>
            <person name="Holroyd S."/>
            <person name="Jagels K."/>
            <person name="Leather S."/>
            <person name="Moule S."/>
            <person name="Norberczak H."/>
            <person name="O'Neil S."/>
            <person name="Ormond D."/>
            <person name="Price C."/>
            <person name="Rabbinowitsch E."/>
            <person name="Rutter S."/>
            <person name="Sanders M."/>
            <person name="Saunders D."/>
            <person name="Seeger K."/>
            <person name="Sharp S."/>
            <person name="Simmonds M."/>
            <person name="Skelton J."/>
            <person name="Squares R."/>
            <person name="Squares S."/>
            <person name="Stevens K."/>
            <person name="Unwin L."/>
            <person name="Whitehead S."/>
            <person name="Barrell B.G."/>
            <person name="Maskell D.J."/>
        </authorList>
    </citation>
    <scope>NUCLEOTIDE SEQUENCE [LARGE SCALE GENOMIC DNA]</scope>
    <source>
        <strain>12822 / ATCC BAA-587 / NCTC 13253</strain>
    </source>
</reference>
<evidence type="ECO:0000255" key="1">
    <source>
        <dbReference type="HAMAP-Rule" id="MF_00641"/>
    </source>
</evidence>
<accession>Q7W294</accession>
<keyword id="KW-0963">Cytoplasm</keyword>
<keyword id="KW-0329">Glyoxylate bypass</keyword>
<keyword id="KW-0460">Magnesium</keyword>
<keyword id="KW-0479">Metal-binding</keyword>
<keyword id="KW-0558">Oxidation</keyword>
<keyword id="KW-0808">Transferase</keyword>
<keyword id="KW-0816">Tricarboxylic acid cycle</keyword>
<comment type="function">
    <text evidence="1">Involved in the glycolate utilization. Catalyzes the condensation and subsequent hydrolysis of acetyl-coenzyme A (acetyl-CoA) and glyoxylate to form malate and CoA.</text>
</comment>
<comment type="catalytic activity">
    <reaction evidence="1">
        <text>glyoxylate + acetyl-CoA + H2O = (S)-malate + CoA + H(+)</text>
        <dbReference type="Rhea" id="RHEA:18181"/>
        <dbReference type="ChEBI" id="CHEBI:15377"/>
        <dbReference type="ChEBI" id="CHEBI:15378"/>
        <dbReference type="ChEBI" id="CHEBI:15589"/>
        <dbReference type="ChEBI" id="CHEBI:36655"/>
        <dbReference type="ChEBI" id="CHEBI:57287"/>
        <dbReference type="ChEBI" id="CHEBI:57288"/>
        <dbReference type="EC" id="2.3.3.9"/>
    </reaction>
</comment>
<comment type="cofactor">
    <cofactor evidence="1">
        <name>Mg(2+)</name>
        <dbReference type="ChEBI" id="CHEBI:18420"/>
    </cofactor>
</comment>
<comment type="pathway">
    <text evidence="1">Carbohydrate metabolism; glyoxylate cycle; (S)-malate from isocitrate: step 2/2.</text>
</comment>
<comment type="subunit">
    <text evidence="1">Monomer.</text>
</comment>
<comment type="subcellular location">
    <subcellularLocation>
        <location evidence="1">Cytoplasm</location>
    </subcellularLocation>
</comment>
<comment type="similarity">
    <text evidence="1">Belongs to the malate synthase family. GlcB subfamily.</text>
</comment>
<organism>
    <name type="scientific">Bordetella parapertussis (strain 12822 / ATCC BAA-587 / NCTC 13253)</name>
    <dbReference type="NCBI Taxonomy" id="257311"/>
    <lineage>
        <taxon>Bacteria</taxon>
        <taxon>Pseudomonadati</taxon>
        <taxon>Pseudomonadota</taxon>
        <taxon>Betaproteobacteria</taxon>
        <taxon>Burkholderiales</taxon>
        <taxon>Alcaligenaceae</taxon>
        <taxon>Bordetella</taxon>
    </lineage>
</organism>
<proteinExistence type="inferred from homology"/>
<dbReference type="EC" id="2.3.3.9" evidence="1"/>
<dbReference type="EMBL" id="BX640423">
    <property type="protein sequence ID" value="CAE39837.1"/>
    <property type="molecule type" value="Genomic_DNA"/>
</dbReference>
<dbReference type="RefSeq" id="WP_010925701.1">
    <property type="nucleotide sequence ID" value="NC_002928.3"/>
</dbReference>
<dbReference type="SMR" id="Q7W294"/>
<dbReference type="KEGG" id="bpa:BPP0096"/>
<dbReference type="HOGENOM" id="CLU_028446_1_0_4"/>
<dbReference type="UniPathway" id="UPA00703">
    <property type="reaction ID" value="UER00720"/>
</dbReference>
<dbReference type="Proteomes" id="UP000001421">
    <property type="component" value="Chromosome"/>
</dbReference>
<dbReference type="GO" id="GO:0005829">
    <property type="term" value="C:cytosol"/>
    <property type="evidence" value="ECO:0007669"/>
    <property type="project" value="TreeGrafter"/>
</dbReference>
<dbReference type="GO" id="GO:0000287">
    <property type="term" value="F:magnesium ion binding"/>
    <property type="evidence" value="ECO:0007669"/>
    <property type="project" value="TreeGrafter"/>
</dbReference>
<dbReference type="GO" id="GO:0004474">
    <property type="term" value="F:malate synthase activity"/>
    <property type="evidence" value="ECO:0007669"/>
    <property type="project" value="UniProtKB-UniRule"/>
</dbReference>
<dbReference type="GO" id="GO:0009436">
    <property type="term" value="P:glyoxylate catabolic process"/>
    <property type="evidence" value="ECO:0007669"/>
    <property type="project" value="TreeGrafter"/>
</dbReference>
<dbReference type="GO" id="GO:0006097">
    <property type="term" value="P:glyoxylate cycle"/>
    <property type="evidence" value="ECO:0007669"/>
    <property type="project" value="UniProtKB-UniRule"/>
</dbReference>
<dbReference type="GO" id="GO:0006099">
    <property type="term" value="P:tricarboxylic acid cycle"/>
    <property type="evidence" value="ECO:0007669"/>
    <property type="project" value="UniProtKB-KW"/>
</dbReference>
<dbReference type="FunFam" id="3.20.20.360:FF:000002">
    <property type="entry name" value="Malate synthase G"/>
    <property type="match status" value="1"/>
</dbReference>
<dbReference type="Gene3D" id="3.20.20.360">
    <property type="entry name" value="Malate synthase, domain 3"/>
    <property type="match status" value="2"/>
</dbReference>
<dbReference type="Gene3D" id="1.20.1220.12">
    <property type="entry name" value="Malate synthase, domain III"/>
    <property type="match status" value="1"/>
</dbReference>
<dbReference type="HAMAP" id="MF_00641">
    <property type="entry name" value="Malate_synth_G"/>
    <property type="match status" value="1"/>
</dbReference>
<dbReference type="InterPro" id="IPR044856">
    <property type="entry name" value="Malate_synth_C_sf"/>
</dbReference>
<dbReference type="InterPro" id="IPR011076">
    <property type="entry name" value="Malate_synth_sf"/>
</dbReference>
<dbReference type="InterPro" id="IPR001465">
    <property type="entry name" value="Malate_synthase_TIM"/>
</dbReference>
<dbReference type="InterPro" id="IPR006253">
    <property type="entry name" value="Malate_synthG"/>
</dbReference>
<dbReference type="InterPro" id="IPR048355">
    <property type="entry name" value="MS_C"/>
</dbReference>
<dbReference type="InterPro" id="IPR048356">
    <property type="entry name" value="MS_N"/>
</dbReference>
<dbReference type="InterPro" id="IPR046363">
    <property type="entry name" value="MS_N_TIM-barrel_dom"/>
</dbReference>
<dbReference type="InterPro" id="IPR048357">
    <property type="entry name" value="MSG_insertion"/>
</dbReference>
<dbReference type="NCBIfam" id="TIGR01345">
    <property type="entry name" value="malate_syn_G"/>
    <property type="match status" value="1"/>
</dbReference>
<dbReference type="NCBIfam" id="NF002825">
    <property type="entry name" value="PRK02999.1"/>
    <property type="match status" value="1"/>
</dbReference>
<dbReference type="PANTHER" id="PTHR42739">
    <property type="entry name" value="MALATE SYNTHASE G"/>
    <property type="match status" value="1"/>
</dbReference>
<dbReference type="PANTHER" id="PTHR42739:SF1">
    <property type="entry name" value="MALATE SYNTHASE G"/>
    <property type="match status" value="1"/>
</dbReference>
<dbReference type="Pfam" id="PF20659">
    <property type="entry name" value="MS_C"/>
    <property type="match status" value="1"/>
</dbReference>
<dbReference type="Pfam" id="PF20656">
    <property type="entry name" value="MS_N"/>
    <property type="match status" value="1"/>
</dbReference>
<dbReference type="Pfam" id="PF01274">
    <property type="entry name" value="MS_TIM-barrel"/>
    <property type="match status" value="1"/>
</dbReference>
<dbReference type="Pfam" id="PF20658">
    <property type="entry name" value="MSG_insertion"/>
    <property type="match status" value="1"/>
</dbReference>
<dbReference type="SUPFAM" id="SSF51645">
    <property type="entry name" value="Malate synthase G"/>
    <property type="match status" value="1"/>
</dbReference>
<gene>
    <name evidence="1" type="primary">glcB</name>
    <name type="ordered locus">BPP0096</name>
</gene>
<name>MASZ_BORPA</name>
<sequence length="725" mass="78547">MTERIPHHGLQVAASLHRFIEDEALSGSGLAPDEFWAGFAALVRDLAPRNRELLAERDRLQGEIDAWHRAHPGPVRDSAGYQALLERIGYLQPQPAQVTASTRDVDSEIASQAGPQLVVPVSNARYALNAANARWGSLYDALYGTDAIPPVAGDDGKGYNPARGEAVIARARAFLDEAAPLAQGSHADATAYAIEGGKLAVTLGAGQRTGLRNPAQLAGYQGDASQPAAVLLANNGLHFEIQIDRQHQIGATDAAGVKDVLLEAALTTIMDCEDSVAAVDADDKVLIYRNWLGLMKGDLSESVTKGGKTFTRRLNADRQYHKPDGGTLTLHGRSLMFVRNVGHLMTNPAILDEQGNEVPEGILDAVITSLAALPDRANRLNSRTGSIYIVKPKMHGPAEAAFANELFDRVEDLLKLPRHTIKMGIMDEERRTSVNLKACIAAAAARVAFINTGFLDRTGDEMHTGMEAGPMLRKGDMKSSAWITAYERNNVLVGLDCGLRGRAQIGKGMWAMPDMMAAMLEQKIGHPKAGANTAWVPSPTAATLHAMHYHQVDVAAVQQALEQTRYDSVRDELLAGLLTVPVGDPAAWSADDIQRELDNNAQGILGYVVRWIDQGVGCSKVPDINNVGLMEDRATLRISSQHIANWLRHGIVDRAQVNATFERMAKVVDQQNAGDPNYLPMAGHFDTSFAYRAACALVFEGLTQPNGYTEPLLHEYRQAFKAAQR</sequence>
<feature type="chain" id="PRO_1000056894" description="Malate synthase G">
    <location>
        <begin position="1"/>
        <end position="725"/>
    </location>
</feature>
<feature type="active site" description="Proton acceptor" evidence="1">
    <location>
        <position position="339"/>
    </location>
</feature>
<feature type="active site" description="Proton donor" evidence="1">
    <location>
        <position position="632"/>
    </location>
</feature>
<feature type="binding site" evidence="1">
    <location>
        <position position="118"/>
    </location>
    <ligand>
        <name>acetyl-CoA</name>
        <dbReference type="ChEBI" id="CHEBI:57288"/>
    </ligand>
</feature>
<feature type="binding site" evidence="1">
    <location>
        <begin position="125"/>
        <end position="126"/>
    </location>
    <ligand>
        <name>acetyl-CoA</name>
        <dbReference type="ChEBI" id="CHEBI:57288"/>
    </ligand>
</feature>
<feature type="binding site" evidence="1">
    <location>
        <position position="275"/>
    </location>
    <ligand>
        <name>acetyl-CoA</name>
        <dbReference type="ChEBI" id="CHEBI:57288"/>
    </ligand>
</feature>
<feature type="binding site" evidence="1">
    <location>
        <position position="312"/>
    </location>
    <ligand>
        <name>acetyl-CoA</name>
        <dbReference type="ChEBI" id="CHEBI:57288"/>
    </ligand>
</feature>
<feature type="binding site" evidence="1">
    <location>
        <position position="339"/>
    </location>
    <ligand>
        <name>glyoxylate</name>
        <dbReference type="ChEBI" id="CHEBI:36655"/>
    </ligand>
</feature>
<feature type="binding site" evidence="1">
    <location>
        <position position="428"/>
    </location>
    <ligand>
        <name>glyoxylate</name>
        <dbReference type="ChEBI" id="CHEBI:36655"/>
    </ligand>
</feature>
<feature type="binding site" evidence="1">
    <location>
        <position position="428"/>
    </location>
    <ligand>
        <name>Mg(2+)</name>
        <dbReference type="ChEBI" id="CHEBI:18420"/>
    </ligand>
</feature>
<feature type="binding site" evidence="1">
    <location>
        <begin position="453"/>
        <end position="456"/>
    </location>
    <ligand>
        <name>glyoxylate</name>
        <dbReference type="ChEBI" id="CHEBI:36655"/>
    </ligand>
</feature>
<feature type="binding site" evidence="1">
    <location>
        <position position="456"/>
    </location>
    <ligand>
        <name>Mg(2+)</name>
        <dbReference type="ChEBI" id="CHEBI:18420"/>
    </ligand>
</feature>
<feature type="binding site" evidence="1">
    <location>
        <position position="537"/>
    </location>
    <ligand>
        <name>acetyl-CoA</name>
        <dbReference type="ChEBI" id="CHEBI:57288"/>
    </ligand>
</feature>
<feature type="modified residue" description="Cysteine sulfenic acid (-SOH)" evidence="1">
    <location>
        <position position="618"/>
    </location>
</feature>
<protein>
    <recommendedName>
        <fullName evidence="1">Malate synthase G</fullName>
        <ecNumber evidence="1">2.3.3.9</ecNumber>
    </recommendedName>
</protein>